<proteinExistence type="inferred from homology"/>
<name>SUCD_RICTY</name>
<protein>
    <recommendedName>
        <fullName evidence="1">Succinate--CoA ligase [ADP-forming] subunit alpha</fullName>
        <ecNumber evidence="1">6.2.1.5</ecNumber>
    </recommendedName>
    <alternativeName>
        <fullName evidence="1">Succinyl-CoA synthetase subunit alpha</fullName>
        <shortName evidence="1">SCS-alpha</shortName>
    </alternativeName>
</protein>
<organism>
    <name type="scientific">Rickettsia typhi (strain ATCC VR-144 / Wilmington)</name>
    <dbReference type="NCBI Taxonomy" id="257363"/>
    <lineage>
        <taxon>Bacteria</taxon>
        <taxon>Pseudomonadati</taxon>
        <taxon>Pseudomonadota</taxon>
        <taxon>Alphaproteobacteria</taxon>
        <taxon>Rickettsiales</taxon>
        <taxon>Rickettsiaceae</taxon>
        <taxon>Rickettsieae</taxon>
        <taxon>Rickettsia</taxon>
        <taxon>typhus group</taxon>
    </lineage>
</organism>
<sequence length="292" mass="30250">MAILINKKTKVICQGFTGSQGTFHSEQAIAYGTNMVGGVTPGKGGHTHLNLPVYNTVHEAKAKTDANASVIYVPPGFAADSILEAIDAKIEVVVCITEGIPVLDMVKVKRALIGSKTRLIGPNCPGVITPGECKIGIMPGHIHKTGIIGIVSRSGTLTYEAVAQTTAVGLGQSTCIGIGGDPVNGTSFVECIEMFLQDDETKAIIMIGEIGGNAEEDAADFIKQSKIKKPIVSFIAGITAPSDKRMGHAGAIISGGKGSAKDKLEALQSAGVTITKSPADIGKTMLDLLNKI</sequence>
<accession>Q9AKE1</accession>
<dbReference type="EC" id="6.2.1.5" evidence="1"/>
<dbReference type="EMBL" id="AJ293310">
    <property type="protein sequence ID" value="CAC33725.1"/>
    <property type="molecule type" value="Genomic_DNA"/>
</dbReference>
<dbReference type="EMBL" id="AE017197">
    <property type="protein sequence ID" value="AAU03896.1"/>
    <property type="molecule type" value="Genomic_DNA"/>
</dbReference>
<dbReference type="RefSeq" id="WP_011190880.1">
    <property type="nucleotide sequence ID" value="NC_006142.1"/>
</dbReference>
<dbReference type="SMR" id="Q9AKE1"/>
<dbReference type="KEGG" id="rty:RT0419"/>
<dbReference type="eggNOG" id="COG0074">
    <property type="taxonomic scope" value="Bacteria"/>
</dbReference>
<dbReference type="HOGENOM" id="CLU_052104_0_0_5"/>
<dbReference type="OrthoDB" id="9807196at2"/>
<dbReference type="UniPathway" id="UPA00223">
    <property type="reaction ID" value="UER00999"/>
</dbReference>
<dbReference type="Proteomes" id="UP000000604">
    <property type="component" value="Chromosome"/>
</dbReference>
<dbReference type="GO" id="GO:0009361">
    <property type="term" value="C:succinate-CoA ligase complex (ADP-forming)"/>
    <property type="evidence" value="ECO:0007669"/>
    <property type="project" value="TreeGrafter"/>
</dbReference>
<dbReference type="GO" id="GO:0000166">
    <property type="term" value="F:nucleotide binding"/>
    <property type="evidence" value="ECO:0007669"/>
    <property type="project" value="UniProtKB-KW"/>
</dbReference>
<dbReference type="GO" id="GO:0004775">
    <property type="term" value="F:succinate-CoA ligase (ADP-forming) activity"/>
    <property type="evidence" value="ECO:0007669"/>
    <property type="project" value="UniProtKB-UniRule"/>
</dbReference>
<dbReference type="GO" id="GO:0004776">
    <property type="term" value="F:succinate-CoA ligase (GDP-forming) activity"/>
    <property type="evidence" value="ECO:0007669"/>
    <property type="project" value="TreeGrafter"/>
</dbReference>
<dbReference type="GO" id="GO:0006099">
    <property type="term" value="P:tricarboxylic acid cycle"/>
    <property type="evidence" value="ECO:0007669"/>
    <property type="project" value="UniProtKB-UniRule"/>
</dbReference>
<dbReference type="FunFam" id="3.40.50.720:FF:000002">
    <property type="entry name" value="Succinate--CoA ligase [ADP-forming] subunit alpha"/>
    <property type="match status" value="1"/>
</dbReference>
<dbReference type="FunFam" id="3.40.50.261:FF:000005">
    <property type="entry name" value="Succinate--CoA ligase [ADP-forming] subunit alpha, mitochondrial"/>
    <property type="match status" value="1"/>
</dbReference>
<dbReference type="Gene3D" id="3.40.50.720">
    <property type="entry name" value="NAD(P)-binding Rossmann-like Domain"/>
    <property type="match status" value="1"/>
</dbReference>
<dbReference type="Gene3D" id="3.40.50.261">
    <property type="entry name" value="Succinyl-CoA synthetase domains"/>
    <property type="match status" value="1"/>
</dbReference>
<dbReference type="HAMAP" id="MF_01988">
    <property type="entry name" value="Succ_CoA_alpha"/>
    <property type="match status" value="1"/>
</dbReference>
<dbReference type="InterPro" id="IPR017440">
    <property type="entry name" value="Cit_synth/succinyl-CoA_lig_AS"/>
</dbReference>
<dbReference type="InterPro" id="IPR033847">
    <property type="entry name" value="Citrt_syn/SCS-alpha_CS"/>
</dbReference>
<dbReference type="InterPro" id="IPR003781">
    <property type="entry name" value="CoA-bd"/>
</dbReference>
<dbReference type="InterPro" id="IPR005810">
    <property type="entry name" value="CoA_lig_alpha"/>
</dbReference>
<dbReference type="InterPro" id="IPR036291">
    <property type="entry name" value="NAD(P)-bd_dom_sf"/>
</dbReference>
<dbReference type="InterPro" id="IPR005811">
    <property type="entry name" value="SUCC_ACL_C"/>
</dbReference>
<dbReference type="InterPro" id="IPR016102">
    <property type="entry name" value="Succinyl-CoA_synth-like"/>
</dbReference>
<dbReference type="NCBIfam" id="NF004230">
    <property type="entry name" value="PRK05678.1"/>
    <property type="match status" value="1"/>
</dbReference>
<dbReference type="NCBIfam" id="TIGR01019">
    <property type="entry name" value="sucCoAalpha"/>
    <property type="match status" value="1"/>
</dbReference>
<dbReference type="PANTHER" id="PTHR11117:SF2">
    <property type="entry name" value="SUCCINATE--COA LIGASE [ADP_GDP-FORMING] SUBUNIT ALPHA, MITOCHONDRIAL"/>
    <property type="match status" value="1"/>
</dbReference>
<dbReference type="PANTHER" id="PTHR11117">
    <property type="entry name" value="SUCCINYL-COA LIGASE SUBUNIT ALPHA"/>
    <property type="match status" value="1"/>
</dbReference>
<dbReference type="Pfam" id="PF02629">
    <property type="entry name" value="CoA_binding"/>
    <property type="match status" value="1"/>
</dbReference>
<dbReference type="Pfam" id="PF00549">
    <property type="entry name" value="Ligase_CoA"/>
    <property type="match status" value="1"/>
</dbReference>
<dbReference type="PIRSF" id="PIRSF001553">
    <property type="entry name" value="SucCS_alpha"/>
    <property type="match status" value="1"/>
</dbReference>
<dbReference type="PRINTS" id="PR01798">
    <property type="entry name" value="SCOASYNTHASE"/>
</dbReference>
<dbReference type="SMART" id="SM00881">
    <property type="entry name" value="CoA_binding"/>
    <property type="match status" value="1"/>
</dbReference>
<dbReference type="SUPFAM" id="SSF51735">
    <property type="entry name" value="NAD(P)-binding Rossmann-fold domains"/>
    <property type="match status" value="1"/>
</dbReference>
<dbReference type="SUPFAM" id="SSF52210">
    <property type="entry name" value="Succinyl-CoA synthetase domains"/>
    <property type="match status" value="1"/>
</dbReference>
<dbReference type="PROSITE" id="PS01216">
    <property type="entry name" value="SUCCINYL_COA_LIG_1"/>
    <property type="match status" value="1"/>
</dbReference>
<dbReference type="PROSITE" id="PS00399">
    <property type="entry name" value="SUCCINYL_COA_LIG_2"/>
    <property type="match status" value="1"/>
</dbReference>
<keyword id="KW-0436">Ligase</keyword>
<keyword id="KW-0547">Nucleotide-binding</keyword>
<keyword id="KW-0816">Tricarboxylic acid cycle</keyword>
<comment type="function">
    <text evidence="1">Succinyl-CoA synthetase functions in the citric acid cycle (TCA), coupling the hydrolysis of succinyl-CoA to the synthesis of either ATP or GTP and thus represents the only step of substrate-level phosphorylation in the TCA. The alpha subunit of the enzyme binds the substrates coenzyme A and phosphate, while succinate binding and nucleotide specificity is provided by the beta subunit.</text>
</comment>
<comment type="catalytic activity">
    <reaction evidence="1">
        <text>succinate + ATP + CoA = succinyl-CoA + ADP + phosphate</text>
        <dbReference type="Rhea" id="RHEA:17661"/>
        <dbReference type="ChEBI" id="CHEBI:30031"/>
        <dbReference type="ChEBI" id="CHEBI:30616"/>
        <dbReference type="ChEBI" id="CHEBI:43474"/>
        <dbReference type="ChEBI" id="CHEBI:57287"/>
        <dbReference type="ChEBI" id="CHEBI:57292"/>
        <dbReference type="ChEBI" id="CHEBI:456216"/>
        <dbReference type="EC" id="6.2.1.5"/>
    </reaction>
    <physiologicalReaction direction="right-to-left" evidence="1">
        <dbReference type="Rhea" id="RHEA:17663"/>
    </physiologicalReaction>
</comment>
<comment type="catalytic activity">
    <reaction evidence="1">
        <text>GTP + succinate + CoA = succinyl-CoA + GDP + phosphate</text>
        <dbReference type="Rhea" id="RHEA:22120"/>
        <dbReference type="ChEBI" id="CHEBI:30031"/>
        <dbReference type="ChEBI" id="CHEBI:37565"/>
        <dbReference type="ChEBI" id="CHEBI:43474"/>
        <dbReference type="ChEBI" id="CHEBI:57287"/>
        <dbReference type="ChEBI" id="CHEBI:57292"/>
        <dbReference type="ChEBI" id="CHEBI:58189"/>
    </reaction>
    <physiologicalReaction direction="right-to-left" evidence="1">
        <dbReference type="Rhea" id="RHEA:22122"/>
    </physiologicalReaction>
</comment>
<comment type="pathway">
    <text evidence="1">Carbohydrate metabolism; tricarboxylic acid cycle; succinate from succinyl-CoA (ligase route): step 1/1.</text>
</comment>
<comment type="subunit">
    <text evidence="1">Heterotetramer of two alpha and two beta subunits.</text>
</comment>
<comment type="similarity">
    <text evidence="1">Belongs to the succinate/malate CoA ligase alpha subunit family.</text>
</comment>
<gene>
    <name evidence="1" type="primary">sucD</name>
    <name type="ordered locus">RT0419</name>
</gene>
<feature type="chain" id="PRO_0000286490" description="Succinate--CoA ligase [ADP-forming] subunit alpha">
    <location>
        <begin position="1"/>
        <end position="292"/>
    </location>
</feature>
<feature type="active site" description="Tele-phosphohistidine intermediate" evidence="1">
    <location>
        <position position="248"/>
    </location>
</feature>
<feature type="binding site" evidence="1">
    <location>
        <begin position="17"/>
        <end position="20"/>
    </location>
    <ligand>
        <name>CoA</name>
        <dbReference type="ChEBI" id="CHEBI:57287"/>
    </ligand>
</feature>
<feature type="binding site" evidence="1">
    <location>
        <position position="43"/>
    </location>
    <ligand>
        <name>CoA</name>
        <dbReference type="ChEBI" id="CHEBI:57287"/>
    </ligand>
</feature>
<feature type="binding site" evidence="1">
    <location>
        <begin position="96"/>
        <end position="98"/>
    </location>
    <ligand>
        <name>CoA</name>
        <dbReference type="ChEBI" id="CHEBI:57287"/>
    </ligand>
</feature>
<feature type="binding site" evidence="1">
    <location>
        <position position="159"/>
    </location>
    <ligand>
        <name>substrate</name>
        <note>ligand shared with subunit beta</note>
    </ligand>
</feature>
<evidence type="ECO:0000255" key="1">
    <source>
        <dbReference type="HAMAP-Rule" id="MF_01988"/>
    </source>
</evidence>
<reference key="1">
    <citation type="journal article" date="2001" name="Mol. Biol. Evol.">
        <title>Pseudogenes, junk DNA, and the dynamics of Rickettsia genomes.</title>
        <authorList>
            <person name="Andersson J.O."/>
            <person name="Andersson S.G.E."/>
        </authorList>
    </citation>
    <scope>NUCLEOTIDE SEQUENCE [GENOMIC DNA]</scope>
    <source>
        <strain>ATCC VR-144 / Wilmington</strain>
    </source>
</reference>
<reference key="2">
    <citation type="journal article" date="2004" name="J. Bacteriol.">
        <title>Complete genome sequence of Rickettsia typhi and comparison with sequences of other Rickettsiae.</title>
        <authorList>
            <person name="McLeod M.P."/>
            <person name="Qin X."/>
            <person name="Karpathy S.E."/>
            <person name="Gioia J."/>
            <person name="Highlander S.K."/>
            <person name="Fox G.E."/>
            <person name="McNeill T.Z."/>
            <person name="Jiang H."/>
            <person name="Muzny D."/>
            <person name="Jacob L.S."/>
            <person name="Hawes A.C."/>
            <person name="Sodergren E."/>
            <person name="Gill R."/>
            <person name="Hume J."/>
            <person name="Morgan M."/>
            <person name="Fan G."/>
            <person name="Amin A.G."/>
            <person name="Gibbs R.A."/>
            <person name="Hong C."/>
            <person name="Yu X.-J."/>
            <person name="Walker D.H."/>
            <person name="Weinstock G.M."/>
        </authorList>
    </citation>
    <scope>NUCLEOTIDE SEQUENCE [LARGE SCALE GENOMIC DNA]</scope>
    <source>
        <strain>ATCC VR-144 / Wilmington</strain>
    </source>
</reference>